<organism>
    <name type="scientific">Escherichia coli O81 (strain ED1a)</name>
    <dbReference type="NCBI Taxonomy" id="585397"/>
    <lineage>
        <taxon>Bacteria</taxon>
        <taxon>Pseudomonadati</taxon>
        <taxon>Pseudomonadota</taxon>
        <taxon>Gammaproteobacteria</taxon>
        <taxon>Enterobacterales</taxon>
        <taxon>Enterobacteriaceae</taxon>
        <taxon>Escherichia</taxon>
    </lineage>
</organism>
<feature type="chain" id="PRO_1000148795" description="Vitamin B12 import ATP-binding protein BtuD">
    <location>
        <begin position="1"/>
        <end position="249"/>
    </location>
</feature>
<feature type="domain" description="ABC transporter" evidence="1">
    <location>
        <begin position="1"/>
        <end position="233"/>
    </location>
</feature>
<feature type="binding site" evidence="1">
    <location>
        <begin position="33"/>
        <end position="40"/>
    </location>
    <ligand>
        <name>ATP</name>
        <dbReference type="ChEBI" id="CHEBI:30616"/>
    </ligand>
</feature>
<comment type="function">
    <text evidence="1">Part of the ABC transporter complex BtuCDF involved in vitamin B12 import. Responsible for energy coupling to the transport system.</text>
</comment>
<comment type="catalytic activity">
    <reaction evidence="1">
        <text>an R-cob(III)alamin(out) + ATP + H2O = an R-cob(III)alamin(in) + ADP + phosphate + H(+)</text>
        <dbReference type="Rhea" id="RHEA:17873"/>
        <dbReference type="ChEBI" id="CHEBI:15377"/>
        <dbReference type="ChEBI" id="CHEBI:15378"/>
        <dbReference type="ChEBI" id="CHEBI:30616"/>
        <dbReference type="ChEBI" id="CHEBI:43474"/>
        <dbReference type="ChEBI" id="CHEBI:140785"/>
        <dbReference type="ChEBI" id="CHEBI:456216"/>
        <dbReference type="EC" id="7.6.2.8"/>
    </reaction>
</comment>
<comment type="subunit">
    <text evidence="1">The complex is composed of two ATP-binding proteins (BtuD), two transmembrane proteins (BtuC) and a solute-binding protein (BtuF).</text>
</comment>
<comment type="subcellular location">
    <subcellularLocation>
        <location evidence="1">Cell inner membrane</location>
        <topology evidence="1">Peripheral membrane protein</topology>
    </subcellularLocation>
</comment>
<comment type="similarity">
    <text evidence="1">Belongs to the ABC transporter superfamily. Vitamin B12 importer (TC 3.A.1.13.1) family.</text>
</comment>
<evidence type="ECO:0000255" key="1">
    <source>
        <dbReference type="HAMAP-Rule" id="MF_01005"/>
    </source>
</evidence>
<name>BTUD_ECO81</name>
<reference key="1">
    <citation type="journal article" date="2009" name="PLoS Genet.">
        <title>Organised genome dynamics in the Escherichia coli species results in highly diverse adaptive paths.</title>
        <authorList>
            <person name="Touchon M."/>
            <person name="Hoede C."/>
            <person name="Tenaillon O."/>
            <person name="Barbe V."/>
            <person name="Baeriswyl S."/>
            <person name="Bidet P."/>
            <person name="Bingen E."/>
            <person name="Bonacorsi S."/>
            <person name="Bouchier C."/>
            <person name="Bouvet O."/>
            <person name="Calteau A."/>
            <person name="Chiapello H."/>
            <person name="Clermont O."/>
            <person name="Cruveiller S."/>
            <person name="Danchin A."/>
            <person name="Diard M."/>
            <person name="Dossat C."/>
            <person name="Karoui M.E."/>
            <person name="Frapy E."/>
            <person name="Garry L."/>
            <person name="Ghigo J.M."/>
            <person name="Gilles A.M."/>
            <person name="Johnson J."/>
            <person name="Le Bouguenec C."/>
            <person name="Lescat M."/>
            <person name="Mangenot S."/>
            <person name="Martinez-Jehanne V."/>
            <person name="Matic I."/>
            <person name="Nassif X."/>
            <person name="Oztas S."/>
            <person name="Petit M.A."/>
            <person name="Pichon C."/>
            <person name="Rouy Z."/>
            <person name="Ruf C.S."/>
            <person name="Schneider D."/>
            <person name="Tourret J."/>
            <person name="Vacherie B."/>
            <person name="Vallenet D."/>
            <person name="Medigue C."/>
            <person name="Rocha E.P.C."/>
            <person name="Denamur E."/>
        </authorList>
    </citation>
    <scope>NUCLEOTIDE SEQUENCE [LARGE SCALE GENOMIC DNA]</scope>
    <source>
        <strain>ED1a</strain>
    </source>
</reference>
<keyword id="KW-0067">ATP-binding</keyword>
<keyword id="KW-0997">Cell inner membrane</keyword>
<keyword id="KW-1003">Cell membrane</keyword>
<keyword id="KW-0472">Membrane</keyword>
<keyword id="KW-0547">Nucleotide-binding</keyword>
<keyword id="KW-1278">Translocase</keyword>
<keyword id="KW-0813">Transport</keyword>
<accession>B7MV91</accession>
<sequence length="249" mass="27085">MSIVMQLQDVAESTRLGPLSGEVRAGEILHLVGPNGAGKSTLLARMAGMTSGKGSIQFAGQPLEAWSATKLALHRAYLSQQQTPPFAMPVWHYLTLHQHDKTRTELLNDVAGALALDDKLGRSTNQLSGGEWQRVRLAAVVLQITPQANPAGQLLLLDEPMNSLDVAQQSALDKILSALCQQGLAIVMSSHDLNHTLRHAHRAWLLKGGKMLASGRREEVLTPANLAQAYGMNFRRLDIEGHRMLISTI</sequence>
<protein>
    <recommendedName>
        <fullName evidence="1">Vitamin B12 import ATP-binding protein BtuD</fullName>
        <ecNumber evidence="1">7.6.2.8</ecNumber>
    </recommendedName>
    <alternativeName>
        <fullName evidence="1">Vitamin B12-transporting ATPase</fullName>
    </alternativeName>
</protein>
<gene>
    <name evidence="1" type="primary">btuD</name>
    <name type="ordered locus">ECED1_1911</name>
</gene>
<proteinExistence type="inferred from homology"/>
<dbReference type="EC" id="7.6.2.8" evidence="1"/>
<dbReference type="EMBL" id="CU928162">
    <property type="protein sequence ID" value="CAR08007.1"/>
    <property type="molecule type" value="Genomic_DNA"/>
</dbReference>
<dbReference type="RefSeq" id="WP_000029464.1">
    <property type="nucleotide sequence ID" value="NC_011745.1"/>
</dbReference>
<dbReference type="SMR" id="B7MV91"/>
<dbReference type="KEGG" id="ecq:ECED1_1911"/>
<dbReference type="HOGENOM" id="CLU_000604_1_11_6"/>
<dbReference type="Proteomes" id="UP000000748">
    <property type="component" value="Chromosome"/>
</dbReference>
<dbReference type="GO" id="GO:0005886">
    <property type="term" value="C:plasma membrane"/>
    <property type="evidence" value="ECO:0007669"/>
    <property type="project" value="UniProtKB-SubCell"/>
</dbReference>
<dbReference type="GO" id="GO:0015420">
    <property type="term" value="F:ABC-type vitamin B12 transporter activity"/>
    <property type="evidence" value="ECO:0007669"/>
    <property type="project" value="UniProtKB-UniRule"/>
</dbReference>
<dbReference type="GO" id="GO:0005524">
    <property type="term" value="F:ATP binding"/>
    <property type="evidence" value="ECO:0007669"/>
    <property type="project" value="UniProtKB-KW"/>
</dbReference>
<dbReference type="GO" id="GO:0016887">
    <property type="term" value="F:ATP hydrolysis activity"/>
    <property type="evidence" value="ECO:0007669"/>
    <property type="project" value="InterPro"/>
</dbReference>
<dbReference type="CDD" id="cd03214">
    <property type="entry name" value="ABC_Iron-Siderophores_B12_Hemin"/>
    <property type="match status" value="1"/>
</dbReference>
<dbReference type="FunFam" id="3.40.50.300:FF:000462">
    <property type="entry name" value="Vitamin B12 import ATP-binding protein BtuD"/>
    <property type="match status" value="1"/>
</dbReference>
<dbReference type="Gene3D" id="3.40.50.300">
    <property type="entry name" value="P-loop containing nucleotide triphosphate hydrolases"/>
    <property type="match status" value="1"/>
</dbReference>
<dbReference type="HAMAP" id="MF_01005">
    <property type="entry name" value="BtuD"/>
    <property type="match status" value="1"/>
</dbReference>
<dbReference type="InterPro" id="IPR003593">
    <property type="entry name" value="AAA+_ATPase"/>
</dbReference>
<dbReference type="InterPro" id="IPR003439">
    <property type="entry name" value="ABC_transporter-like_ATP-bd"/>
</dbReference>
<dbReference type="InterPro" id="IPR017871">
    <property type="entry name" value="ABC_transporter-like_CS"/>
</dbReference>
<dbReference type="InterPro" id="IPR023693">
    <property type="entry name" value="ABC_transptr_BtuD"/>
</dbReference>
<dbReference type="InterPro" id="IPR050153">
    <property type="entry name" value="Metal_Ion_Import_ABC"/>
</dbReference>
<dbReference type="InterPro" id="IPR027417">
    <property type="entry name" value="P-loop_NTPase"/>
</dbReference>
<dbReference type="NCBIfam" id="NF002981">
    <property type="entry name" value="PRK03695.1"/>
    <property type="match status" value="1"/>
</dbReference>
<dbReference type="PANTHER" id="PTHR42734">
    <property type="entry name" value="METAL TRANSPORT SYSTEM ATP-BINDING PROTEIN TM_0124-RELATED"/>
    <property type="match status" value="1"/>
</dbReference>
<dbReference type="PANTHER" id="PTHR42734:SF18">
    <property type="entry name" value="VITAMIN B12 IMPORT ATP-BINDING PROTEIN BTUD"/>
    <property type="match status" value="1"/>
</dbReference>
<dbReference type="Pfam" id="PF00005">
    <property type="entry name" value="ABC_tran"/>
    <property type="match status" value="1"/>
</dbReference>
<dbReference type="SMART" id="SM00382">
    <property type="entry name" value="AAA"/>
    <property type="match status" value="1"/>
</dbReference>
<dbReference type="SUPFAM" id="SSF52540">
    <property type="entry name" value="P-loop containing nucleoside triphosphate hydrolases"/>
    <property type="match status" value="1"/>
</dbReference>
<dbReference type="PROSITE" id="PS00211">
    <property type="entry name" value="ABC_TRANSPORTER_1"/>
    <property type="match status" value="1"/>
</dbReference>
<dbReference type="PROSITE" id="PS50893">
    <property type="entry name" value="ABC_TRANSPORTER_2"/>
    <property type="match status" value="1"/>
</dbReference>